<name>CYSI_YERPS</name>
<sequence length="576" mass="64101">MNEKHPGPLVVSGKLSDGERMKSESNFLRGTIAEDLNNGLTGGFSGDNFLLIRFHGMYQQDDRDIRAERAEQKLEPRHAMMLRCRLPGGIITPQQWLGIDKFAADNTLYGSIRITNRQTFQFHGILKGNVKPAHQLLNELGLDALATANDVNRNVLCTSNPVESALHQEAYEWAKKISEHLLPRTRAYAEIWLDAEKVATTDEEPILGATYLPRKFKTTVVIPPQNDVDLHANDLNFVAVADKGKLIGFNVLVGGGLSIAHGDKNTYPRKASEFGYIPLKHTLAIAEAVVTTQRDWGNRTDRKNAKTKYTLERVGVETFKAEVEKRAGVSFSAIKPYQFTGRGDRIGWVKGVDKKWHLTLFIENGRLLDYPGRSLKTGVAEIAKIHQGDFRLTANQNLIVAGVPEKDKARIEALAREHGLMDDHVTSQRENSMACVSFPTCPLAMAEAERFLPEFVTRVEGILQQHGLADEHIVLRVTGCPNGCGRALLAEVGLVGKAVGRYNLHLGGNREGTRIPRMYRENITADEILLITDQLVGRWAKERHVDEGFGDFVIRAGVIAPVIDSARDFYDVQEAM</sequence>
<gene>
    <name evidence="1" type="primary">cysI</name>
    <name type="ordered locus">YPTB0760</name>
</gene>
<proteinExistence type="inferred from homology"/>
<keyword id="KW-0004">4Fe-4S</keyword>
<keyword id="KW-0028">Amino-acid biosynthesis</keyword>
<keyword id="KW-0198">Cysteine biosynthesis</keyword>
<keyword id="KW-0349">Heme</keyword>
<keyword id="KW-0408">Iron</keyword>
<keyword id="KW-0411">Iron-sulfur</keyword>
<keyword id="KW-0479">Metal-binding</keyword>
<keyword id="KW-0521">NADP</keyword>
<keyword id="KW-0560">Oxidoreductase</keyword>
<reference key="1">
    <citation type="journal article" date="2004" name="Proc. Natl. Acad. Sci. U.S.A.">
        <title>Insights into the evolution of Yersinia pestis through whole-genome comparison with Yersinia pseudotuberculosis.</title>
        <authorList>
            <person name="Chain P.S.G."/>
            <person name="Carniel E."/>
            <person name="Larimer F.W."/>
            <person name="Lamerdin J."/>
            <person name="Stoutland P.O."/>
            <person name="Regala W.M."/>
            <person name="Georgescu A.M."/>
            <person name="Vergez L.M."/>
            <person name="Land M.L."/>
            <person name="Motin V.L."/>
            <person name="Brubaker R.R."/>
            <person name="Fowler J."/>
            <person name="Hinnebusch J."/>
            <person name="Marceau M."/>
            <person name="Medigue C."/>
            <person name="Simonet M."/>
            <person name="Chenal-Francisque V."/>
            <person name="Souza B."/>
            <person name="Dacheux D."/>
            <person name="Elliott J.M."/>
            <person name="Derbise A."/>
            <person name="Hauser L.J."/>
            <person name="Garcia E."/>
        </authorList>
    </citation>
    <scope>NUCLEOTIDE SEQUENCE [LARGE SCALE GENOMIC DNA]</scope>
    <source>
        <strain>IP32953</strain>
    </source>
</reference>
<feature type="chain" id="PRO_0000199918" description="Sulfite reductase [NADPH] hemoprotein beta-component">
    <location>
        <begin position="1"/>
        <end position="576"/>
    </location>
</feature>
<feature type="binding site" evidence="1">
    <location>
        <position position="435"/>
    </location>
    <ligand>
        <name>[4Fe-4S] cluster</name>
        <dbReference type="ChEBI" id="CHEBI:49883"/>
    </ligand>
</feature>
<feature type="binding site" evidence="1">
    <location>
        <position position="441"/>
    </location>
    <ligand>
        <name>[4Fe-4S] cluster</name>
        <dbReference type="ChEBI" id="CHEBI:49883"/>
    </ligand>
</feature>
<feature type="binding site" evidence="1">
    <location>
        <position position="480"/>
    </location>
    <ligand>
        <name>[4Fe-4S] cluster</name>
        <dbReference type="ChEBI" id="CHEBI:49883"/>
    </ligand>
</feature>
<feature type="binding site" evidence="1">
    <location>
        <position position="484"/>
    </location>
    <ligand>
        <name>[4Fe-4S] cluster</name>
        <dbReference type="ChEBI" id="CHEBI:49883"/>
    </ligand>
</feature>
<feature type="binding site" description="axial binding residue" evidence="1">
    <location>
        <position position="484"/>
    </location>
    <ligand>
        <name>siroheme</name>
        <dbReference type="ChEBI" id="CHEBI:60052"/>
    </ligand>
    <ligandPart>
        <name>Fe</name>
        <dbReference type="ChEBI" id="CHEBI:18248"/>
    </ligandPart>
</feature>
<protein>
    <recommendedName>
        <fullName evidence="1">Sulfite reductase [NADPH] hemoprotein beta-component</fullName>
        <shortName evidence="1">SiR-HP</shortName>
        <shortName evidence="1">SiRHP</shortName>
        <ecNumber evidence="1">1.8.1.2</ecNumber>
    </recommendedName>
</protein>
<organism>
    <name type="scientific">Yersinia pseudotuberculosis serotype I (strain IP32953)</name>
    <dbReference type="NCBI Taxonomy" id="273123"/>
    <lineage>
        <taxon>Bacteria</taxon>
        <taxon>Pseudomonadati</taxon>
        <taxon>Pseudomonadota</taxon>
        <taxon>Gammaproteobacteria</taxon>
        <taxon>Enterobacterales</taxon>
        <taxon>Yersiniaceae</taxon>
        <taxon>Yersinia</taxon>
    </lineage>
</organism>
<dbReference type="EC" id="1.8.1.2" evidence="1"/>
<dbReference type="EMBL" id="BX936398">
    <property type="protein sequence ID" value="CAH20000.1"/>
    <property type="molecule type" value="Genomic_DNA"/>
</dbReference>
<dbReference type="RefSeq" id="WP_011191773.1">
    <property type="nucleotide sequence ID" value="NC_006155.1"/>
</dbReference>
<dbReference type="SMR" id="Q66ED3"/>
<dbReference type="GeneID" id="49787234"/>
<dbReference type="KEGG" id="ypo:BZ17_1796"/>
<dbReference type="KEGG" id="yps:YPTB0760"/>
<dbReference type="PATRIC" id="fig|273123.14.peg.1901"/>
<dbReference type="UniPathway" id="UPA00140">
    <property type="reaction ID" value="UER00207"/>
</dbReference>
<dbReference type="Proteomes" id="UP000001011">
    <property type="component" value="Chromosome"/>
</dbReference>
<dbReference type="GO" id="GO:0009337">
    <property type="term" value="C:sulfite reductase complex (NADPH)"/>
    <property type="evidence" value="ECO:0007669"/>
    <property type="project" value="InterPro"/>
</dbReference>
<dbReference type="GO" id="GO:0051539">
    <property type="term" value="F:4 iron, 4 sulfur cluster binding"/>
    <property type="evidence" value="ECO:0007669"/>
    <property type="project" value="UniProtKB-KW"/>
</dbReference>
<dbReference type="GO" id="GO:0020037">
    <property type="term" value="F:heme binding"/>
    <property type="evidence" value="ECO:0007669"/>
    <property type="project" value="InterPro"/>
</dbReference>
<dbReference type="GO" id="GO:0046872">
    <property type="term" value="F:metal ion binding"/>
    <property type="evidence" value="ECO:0007669"/>
    <property type="project" value="UniProtKB-KW"/>
</dbReference>
<dbReference type="GO" id="GO:0050661">
    <property type="term" value="F:NADP binding"/>
    <property type="evidence" value="ECO:0007669"/>
    <property type="project" value="InterPro"/>
</dbReference>
<dbReference type="GO" id="GO:0050311">
    <property type="term" value="F:sulfite reductase (ferredoxin) activity"/>
    <property type="evidence" value="ECO:0007669"/>
    <property type="project" value="TreeGrafter"/>
</dbReference>
<dbReference type="GO" id="GO:0004783">
    <property type="term" value="F:sulfite reductase (NADPH) activity"/>
    <property type="evidence" value="ECO:0007669"/>
    <property type="project" value="UniProtKB-UniRule"/>
</dbReference>
<dbReference type="GO" id="GO:0019344">
    <property type="term" value="P:cysteine biosynthetic process"/>
    <property type="evidence" value="ECO:0007669"/>
    <property type="project" value="UniProtKB-KW"/>
</dbReference>
<dbReference type="GO" id="GO:0070814">
    <property type="term" value="P:hydrogen sulfide biosynthetic process"/>
    <property type="evidence" value="ECO:0007669"/>
    <property type="project" value="UniProtKB-UniRule"/>
</dbReference>
<dbReference type="GO" id="GO:0000103">
    <property type="term" value="P:sulfate assimilation"/>
    <property type="evidence" value="ECO:0007669"/>
    <property type="project" value="UniProtKB-UniRule"/>
</dbReference>
<dbReference type="FunFam" id="3.30.413.10:FF:000003">
    <property type="entry name" value="Sulfite reductase [NADPH] hemoprotein beta-component"/>
    <property type="match status" value="1"/>
</dbReference>
<dbReference type="FunFam" id="3.30.413.10:FF:000004">
    <property type="entry name" value="Sulfite reductase [NADPH] hemoprotein beta-component"/>
    <property type="match status" value="1"/>
</dbReference>
<dbReference type="Gene3D" id="3.30.413.10">
    <property type="entry name" value="Sulfite Reductase Hemoprotein, domain 1"/>
    <property type="match status" value="2"/>
</dbReference>
<dbReference type="HAMAP" id="MF_01540">
    <property type="entry name" value="CysI"/>
    <property type="match status" value="1"/>
</dbReference>
<dbReference type="InterPro" id="IPR011786">
    <property type="entry name" value="CysI"/>
</dbReference>
<dbReference type="InterPro" id="IPR005117">
    <property type="entry name" value="NiRdtase/SiRdtase_haem-b_fer"/>
</dbReference>
<dbReference type="InterPro" id="IPR036136">
    <property type="entry name" value="Nit/Sulf_reduc_fer-like_dom_sf"/>
</dbReference>
<dbReference type="InterPro" id="IPR006067">
    <property type="entry name" value="NO2/SO3_Rdtase_4Fe4S_dom"/>
</dbReference>
<dbReference type="InterPro" id="IPR045169">
    <property type="entry name" value="NO2/SO3_Rdtase_4Fe4S_prot"/>
</dbReference>
<dbReference type="InterPro" id="IPR045854">
    <property type="entry name" value="NO2/SO3_Rdtase_4Fe4S_sf"/>
</dbReference>
<dbReference type="InterPro" id="IPR006066">
    <property type="entry name" value="NO2/SO3_Rdtase_FeS/sirohaem_BS"/>
</dbReference>
<dbReference type="NCBIfam" id="TIGR02041">
    <property type="entry name" value="CysI"/>
    <property type="match status" value="1"/>
</dbReference>
<dbReference type="NCBIfam" id="NF010029">
    <property type="entry name" value="PRK13504.1"/>
    <property type="match status" value="1"/>
</dbReference>
<dbReference type="PANTHER" id="PTHR11493:SF47">
    <property type="entry name" value="SULFITE REDUCTASE [NADPH] SUBUNIT BETA"/>
    <property type="match status" value="1"/>
</dbReference>
<dbReference type="PANTHER" id="PTHR11493">
    <property type="entry name" value="SULFITE REDUCTASE [NADPH] SUBUNIT BETA-RELATED"/>
    <property type="match status" value="1"/>
</dbReference>
<dbReference type="Pfam" id="PF01077">
    <property type="entry name" value="NIR_SIR"/>
    <property type="match status" value="1"/>
</dbReference>
<dbReference type="Pfam" id="PF03460">
    <property type="entry name" value="NIR_SIR_ferr"/>
    <property type="match status" value="2"/>
</dbReference>
<dbReference type="PRINTS" id="PR00397">
    <property type="entry name" value="SIROHAEM"/>
</dbReference>
<dbReference type="SUPFAM" id="SSF56014">
    <property type="entry name" value="Nitrite and sulphite reductase 4Fe-4S domain-like"/>
    <property type="match status" value="2"/>
</dbReference>
<dbReference type="SUPFAM" id="SSF55124">
    <property type="entry name" value="Nitrite/Sulfite reductase N-terminal domain-like"/>
    <property type="match status" value="2"/>
</dbReference>
<dbReference type="PROSITE" id="PS00365">
    <property type="entry name" value="NIR_SIR"/>
    <property type="match status" value="1"/>
</dbReference>
<comment type="function">
    <text evidence="1">Component of the sulfite reductase complex that catalyzes the 6-electron reduction of sulfite to sulfide. This is one of several activities required for the biosynthesis of L-cysteine from sulfate.</text>
</comment>
<comment type="catalytic activity">
    <reaction evidence="1">
        <text>hydrogen sulfide + 3 NADP(+) + 3 H2O = sulfite + 3 NADPH + 4 H(+)</text>
        <dbReference type="Rhea" id="RHEA:13801"/>
        <dbReference type="ChEBI" id="CHEBI:15377"/>
        <dbReference type="ChEBI" id="CHEBI:15378"/>
        <dbReference type="ChEBI" id="CHEBI:17359"/>
        <dbReference type="ChEBI" id="CHEBI:29919"/>
        <dbReference type="ChEBI" id="CHEBI:57783"/>
        <dbReference type="ChEBI" id="CHEBI:58349"/>
        <dbReference type="EC" id="1.8.1.2"/>
    </reaction>
</comment>
<comment type="cofactor">
    <cofactor evidence="1">
        <name>siroheme</name>
        <dbReference type="ChEBI" id="CHEBI:60052"/>
    </cofactor>
    <text evidence="1">Binds 1 siroheme per subunit.</text>
</comment>
<comment type="cofactor">
    <cofactor evidence="1">
        <name>[4Fe-4S] cluster</name>
        <dbReference type="ChEBI" id="CHEBI:49883"/>
    </cofactor>
    <text evidence="1">Binds 1 [4Fe-4S] cluster per subunit.</text>
</comment>
<comment type="pathway">
    <text evidence="1">Sulfur metabolism; hydrogen sulfide biosynthesis; hydrogen sulfide from sulfite (NADPH route): step 1/1.</text>
</comment>
<comment type="subunit">
    <text evidence="1">Alpha(8)-beta(8). The alpha component is a flavoprotein, the beta component is a hemoprotein.</text>
</comment>
<comment type="similarity">
    <text evidence="1">Belongs to the nitrite and sulfite reductase 4Fe-4S domain family.</text>
</comment>
<accession>Q66ED3</accession>
<evidence type="ECO:0000255" key="1">
    <source>
        <dbReference type="HAMAP-Rule" id="MF_01540"/>
    </source>
</evidence>